<dbReference type="EC" id="6.3.5.2" evidence="1"/>
<dbReference type="EMBL" id="CP000880">
    <property type="protein sequence ID" value="ABX20303.1"/>
    <property type="molecule type" value="Genomic_DNA"/>
</dbReference>
<dbReference type="SMR" id="A9MHM5"/>
<dbReference type="STRING" id="41514.SARI_00366"/>
<dbReference type="MEROPS" id="C26.957"/>
<dbReference type="KEGG" id="ses:SARI_00366"/>
<dbReference type="HOGENOM" id="CLU_014340_0_5_6"/>
<dbReference type="UniPathway" id="UPA00189">
    <property type="reaction ID" value="UER00296"/>
</dbReference>
<dbReference type="Proteomes" id="UP000002084">
    <property type="component" value="Chromosome"/>
</dbReference>
<dbReference type="GO" id="GO:0005829">
    <property type="term" value="C:cytosol"/>
    <property type="evidence" value="ECO:0007669"/>
    <property type="project" value="TreeGrafter"/>
</dbReference>
<dbReference type="GO" id="GO:0005524">
    <property type="term" value="F:ATP binding"/>
    <property type="evidence" value="ECO:0007669"/>
    <property type="project" value="UniProtKB-UniRule"/>
</dbReference>
<dbReference type="GO" id="GO:0003921">
    <property type="term" value="F:GMP synthase activity"/>
    <property type="evidence" value="ECO:0007669"/>
    <property type="project" value="InterPro"/>
</dbReference>
<dbReference type="CDD" id="cd01742">
    <property type="entry name" value="GATase1_GMP_Synthase"/>
    <property type="match status" value="1"/>
</dbReference>
<dbReference type="CDD" id="cd01997">
    <property type="entry name" value="GMP_synthase_C"/>
    <property type="match status" value="1"/>
</dbReference>
<dbReference type="FunFam" id="3.30.300.10:FF:000002">
    <property type="entry name" value="GMP synthase [glutamine-hydrolyzing]"/>
    <property type="match status" value="1"/>
</dbReference>
<dbReference type="FunFam" id="3.40.50.620:FF:000001">
    <property type="entry name" value="GMP synthase [glutamine-hydrolyzing]"/>
    <property type="match status" value="1"/>
</dbReference>
<dbReference type="FunFam" id="3.40.50.880:FF:000001">
    <property type="entry name" value="GMP synthase [glutamine-hydrolyzing]"/>
    <property type="match status" value="1"/>
</dbReference>
<dbReference type="Gene3D" id="3.30.300.10">
    <property type="match status" value="1"/>
</dbReference>
<dbReference type="Gene3D" id="3.40.50.880">
    <property type="match status" value="1"/>
</dbReference>
<dbReference type="Gene3D" id="3.40.50.620">
    <property type="entry name" value="HUPs"/>
    <property type="match status" value="1"/>
</dbReference>
<dbReference type="HAMAP" id="MF_00344">
    <property type="entry name" value="GMP_synthase"/>
    <property type="match status" value="1"/>
</dbReference>
<dbReference type="InterPro" id="IPR029062">
    <property type="entry name" value="Class_I_gatase-like"/>
</dbReference>
<dbReference type="InterPro" id="IPR017926">
    <property type="entry name" value="GATASE"/>
</dbReference>
<dbReference type="InterPro" id="IPR001674">
    <property type="entry name" value="GMP_synth_C"/>
</dbReference>
<dbReference type="InterPro" id="IPR004739">
    <property type="entry name" value="GMP_synth_GATase"/>
</dbReference>
<dbReference type="InterPro" id="IPR022955">
    <property type="entry name" value="GMP_synthase"/>
</dbReference>
<dbReference type="InterPro" id="IPR025777">
    <property type="entry name" value="GMPS_ATP_PPase_dom"/>
</dbReference>
<dbReference type="InterPro" id="IPR022310">
    <property type="entry name" value="NAD/GMP_synthase"/>
</dbReference>
<dbReference type="InterPro" id="IPR014729">
    <property type="entry name" value="Rossmann-like_a/b/a_fold"/>
</dbReference>
<dbReference type="NCBIfam" id="TIGR00884">
    <property type="entry name" value="guaA_Cterm"/>
    <property type="match status" value="1"/>
</dbReference>
<dbReference type="NCBIfam" id="TIGR00888">
    <property type="entry name" value="guaA_Nterm"/>
    <property type="match status" value="1"/>
</dbReference>
<dbReference type="NCBIfam" id="NF000848">
    <property type="entry name" value="PRK00074.1"/>
    <property type="match status" value="1"/>
</dbReference>
<dbReference type="PANTHER" id="PTHR11922:SF2">
    <property type="entry name" value="GMP SYNTHASE [GLUTAMINE-HYDROLYZING]"/>
    <property type="match status" value="1"/>
</dbReference>
<dbReference type="PANTHER" id="PTHR11922">
    <property type="entry name" value="GMP SYNTHASE-RELATED"/>
    <property type="match status" value="1"/>
</dbReference>
<dbReference type="Pfam" id="PF00117">
    <property type="entry name" value="GATase"/>
    <property type="match status" value="1"/>
</dbReference>
<dbReference type="Pfam" id="PF00958">
    <property type="entry name" value="GMP_synt_C"/>
    <property type="match status" value="1"/>
</dbReference>
<dbReference type="Pfam" id="PF02540">
    <property type="entry name" value="NAD_synthase"/>
    <property type="match status" value="1"/>
</dbReference>
<dbReference type="PRINTS" id="PR00097">
    <property type="entry name" value="ANTSNTHASEII"/>
</dbReference>
<dbReference type="PRINTS" id="PR00099">
    <property type="entry name" value="CPSGATASE"/>
</dbReference>
<dbReference type="PRINTS" id="PR00096">
    <property type="entry name" value="GATASE"/>
</dbReference>
<dbReference type="SUPFAM" id="SSF52402">
    <property type="entry name" value="Adenine nucleotide alpha hydrolases-like"/>
    <property type="match status" value="1"/>
</dbReference>
<dbReference type="SUPFAM" id="SSF52317">
    <property type="entry name" value="Class I glutamine amidotransferase-like"/>
    <property type="match status" value="1"/>
</dbReference>
<dbReference type="SUPFAM" id="SSF54810">
    <property type="entry name" value="GMP synthetase C-terminal dimerisation domain"/>
    <property type="match status" value="1"/>
</dbReference>
<dbReference type="PROSITE" id="PS51273">
    <property type="entry name" value="GATASE_TYPE_1"/>
    <property type="match status" value="1"/>
</dbReference>
<dbReference type="PROSITE" id="PS51553">
    <property type="entry name" value="GMPS_ATP_PPASE"/>
    <property type="match status" value="1"/>
</dbReference>
<evidence type="ECO:0000255" key="1">
    <source>
        <dbReference type="HAMAP-Rule" id="MF_00344"/>
    </source>
</evidence>
<organism>
    <name type="scientific">Salmonella arizonae (strain ATCC BAA-731 / CDC346-86 / RSK2980)</name>
    <dbReference type="NCBI Taxonomy" id="41514"/>
    <lineage>
        <taxon>Bacteria</taxon>
        <taxon>Pseudomonadati</taxon>
        <taxon>Pseudomonadota</taxon>
        <taxon>Gammaproteobacteria</taxon>
        <taxon>Enterobacterales</taxon>
        <taxon>Enterobacteriaceae</taxon>
        <taxon>Salmonella</taxon>
    </lineage>
</organism>
<proteinExistence type="inferred from homology"/>
<gene>
    <name evidence="1" type="primary">guaA</name>
    <name type="ordered locus">SARI_00366</name>
</gene>
<feature type="chain" id="PRO_1000120387" description="GMP synthase [glutamine-hydrolyzing]">
    <location>
        <begin position="1"/>
        <end position="525"/>
    </location>
</feature>
<feature type="domain" description="Glutamine amidotransferase type-1" evidence="1">
    <location>
        <begin position="9"/>
        <end position="207"/>
    </location>
</feature>
<feature type="domain" description="GMPS ATP-PPase" evidence="1">
    <location>
        <begin position="208"/>
        <end position="400"/>
    </location>
</feature>
<feature type="active site" description="Nucleophile" evidence="1">
    <location>
        <position position="86"/>
    </location>
</feature>
<feature type="active site" evidence="1">
    <location>
        <position position="181"/>
    </location>
</feature>
<feature type="active site" evidence="1">
    <location>
        <position position="183"/>
    </location>
</feature>
<feature type="binding site" evidence="1">
    <location>
        <begin position="235"/>
        <end position="241"/>
    </location>
    <ligand>
        <name>ATP</name>
        <dbReference type="ChEBI" id="CHEBI:30616"/>
    </ligand>
</feature>
<reference key="1">
    <citation type="submission" date="2007-11" db="EMBL/GenBank/DDBJ databases">
        <authorList>
            <consortium name="The Salmonella enterica serovar Arizonae Genome Sequencing Project"/>
            <person name="McClelland M."/>
            <person name="Sanderson E.K."/>
            <person name="Porwollik S."/>
            <person name="Spieth J."/>
            <person name="Clifton W.S."/>
            <person name="Fulton R."/>
            <person name="Chunyan W."/>
            <person name="Wollam A."/>
            <person name="Shah N."/>
            <person name="Pepin K."/>
            <person name="Bhonagiri V."/>
            <person name="Nash W."/>
            <person name="Johnson M."/>
            <person name="Thiruvilangam P."/>
            <person name="Wilson R."/>
        </authorList>
    </citation>
    <scope>NUCLEOTIDE SEQUENCE [LARGE SCALE GENOMIC DNA]</scope>
    <source>
        <strain>ATCC BAA-731 / CDC346-86 / RSK2980</strain>
    </source>
</reference>
<keyword id="KW-0067">ATP-binding</keyword>
<keyword id="KW-0315">Glutamine amidotransferase</keyword>
<keyword id="KW-0332">GMP biosynthesis</keyword>
<keyword id="KW-0436">Ligase</keyword>
<keyword id="KW-0547">Nucleotide-binding</keyword>
<keyword id="KW-0658">Purine biosynthesis</keyword>
<keyword id="KW-1185">Reference proteome</keyword>
<comment type="function">
    <text evidence="1">Catalyzes the synthesis of GMP from XMP.</text>
</comment>
<comment type="catalytic activity">
    <reaction evidence="1">
        <text>XMP + L-glutamine + ATP + H2O = GMP + L-glutamate + AMP + diphosphate + 2 H(+)</text>
        <dbReference type="Rhea" id="RHEA:11680"/>
        <dbReference type="ChEBI" id="CHEBI:15377"/>
        <dbReference type="ChEBI" id="CHEBI:15378"/>
        <dbReference type="ChEBI" id="CHEBI:29985"/>
        <dbReference type="ChEBI" id="CHEBI:30616"/>
        <dbReference type="ChEBI" id="CHEBI:33019"/>
        <dbReference type="ChEBI" id="CHEBI:57464"/>
        <dbReference type="ChEBI" id="CHEBI:58115"/>
        <dbReference type="ChEBI" id="CHEBI:58359"/>
        <dbReference type="ChEBI" id="CHEBI:456215"/>
        <dbReference type="EC" id="6.3.5.2"/>
    </reaction>
</comment>
<comment type="pathway">
    <text evidence="1">Purine metabolism; GMP biosynthesis; GMP from XMP (L-Gln route): step 1/1.</text>
</comment>
<comment type="subunit">
    <text evidence="1">Homodimer.</text>
</comment>
<accession>A9MHM5</accession>
<name>GUAA_SALAR</name>
<sequence length="525" mass="58642">MTDNIHKHRILILDFGSQYTQLVARRVRELGVYCELWAWDVTEAQIREFNPSGIILSGGPESTTEENSPRAPQYVFEAGVPVFGVCYGMQTMAMQLGGHVEGSNEREFGYAQVEVLTDSALIRGIEDSLTADGKPLLDVWMSHGDKVTAIPSDFVTVASTESCPFAIMANEEKRFYGVQFHPEVTHTRQGMRMLERFVRDICQCEALWTPAKIIDDAVARIREQVGDDKVILGLSGGVDSSVTAMLLHRAIGKNLTCVFVDNGLLRLNEAEQVMDMFGDHFGLNIVHVPAEDRFLSALAGENDPEAKRKIIGRVFVEVFDEEALKLEDVKWLAQGTIYPDVIESAASATGKAHVIKSHHNVGGLPKEMKMGLVEPLKELFKDEVRKIGLELGLPYDMLYRHPFPGPGLGVRVLGEVKKEYCDLLRRADAIFIEELRKADLYDKVSQAFTVFLPVRSVGVMGDGRKYDWVVSLRAVETIDFMTAHWAHLPYGFLGRVSNRIINEVNGISRVVYDISGKPPATIEWE</sequence>
<protein>
    <recommendedName>
        <fullName evidence="1">GMP synthase [glutamine-hydrolyzing]</fullName>
        <ecNumber evidence="1">6.3.5.2</ecNumber>
    </recommendedName>
    <alternativeName>
        <fullName evidence="1">GMP synthetase</fullName>
    </alternativeName>
    <alternativeName>
        <fullName evidence="1">Glutamine amidotransferase</fullName>
    </alternativeName>
</protein>